<accession>P52220</accession>
<accession>A1B1W8</accession>
<reference key="1">
    <citation type="journal article" date="1997" name="Microbiology">
        <title>The Paracoccus denitrificans ccmA, B and C genes: cloning and sequencing, and analysis of the potential of their products to form a haem or apo-c-type cytochrome transporter.</title>
        <authorList>
            <person name="Page D."/>
            <person name="Pearce D.A."/>
            <person name="Norris H.A."/>
            <person name="Ferguson S.J."/>
        </authorList>
    </citation>
    <scope>NUCLEOTIDE SEQUENCE [GENOMIC DNA]</scope>
</reference>
<reference key="2">
    <citation type="submission" date="2006-12" db="EMBL/GenBank/DDBJ databases">
        <title>Complete sequence of chromosome 1 of Paracoccus denitrificans PD1222.</title>
        <authorList>
            <person name="Copeland A."/>
            <person name="Lucas S."/>
            <person name="Lapidus A."/>
            <person name="Barry K."/>
            <person name="Detter J.C."/>
            <person name="Glavina del Rio T."/>
            <person name="Hammon N."/>
            <person name="Israni S."/>
            <person name="Dalin E."/>
            <person name="Tice H."/>
            <person name="Pitluck S."/>
            <person name="Munk A.C."/>
            <person name="Brettin T."/>
            <person name="Bruce D."/>
            <person name="Han C."/>
            <person name="Tapia R."/>
            <person name="Gilna P."/>
            <person name="Schmutz J."/>
            <person name="Larimer F."/>
            <person name="Land M."/>
            <person name="Hauser L."/>
            <person name="Kyrpides N."/>
            <person name="Lykidis A."/>
            <person name="Spiro S."/>
            <person name="Richardson D.J."/>
            <person name="Moir J.W.B."/>
            <person name="Ferguson S.J."/>
            <person name="van Spanning R.J.M."/>
            <person name="Richardson P."/>
        </authorList>
    </citation>
    <scope>NUCLEOTIDE SEQUENCE [LARGE SCALE GENOMIC DNA]</scope>
    <source>
        <strain>Pd 1222</strain>
    </source>
</reference>
<protein>
    <recommendedName>
        <fullName>Heme exporter protein C</fullName>
    </recommendedName>
    <alternativeName>
        <fullName>Cytochrome c-type biogenesis protein CcmC</fullName>
    </alternativeName>
</protein>
<sequence>MSIWEYANPVKFMRTSGAILPWVVAGAAACTVTGLVWGFLTPEDYKQGATVKIIFLHVPAALMAINIWLMMLVTSLIWLIRRHHVSALAAKAAAPVGAVMTLIALITGAIWGQPMWGTWWEWDPRLTSFLILFLFYLGYMALWEAVENPDSAADLTGVLCLVGSVFALLSRYAVNFWNQGLHQGASLSMAPGERMAAVYRYPLYLTMAGFFLLFLALLLIRTRTEIRRRRLAALLARENRA</sequence>
<organism>
    <name type="scientific">Paracoccus denitrificans (strain Pd 1222)</name>
    <dbReference type="NCBI Taxonomy" id="318586"/>
    <lineage>
        <taxon>Bacteria</taxon>
        <taxon>Pseudomonadati</taxon>
        <taxon>Pseudomonadota</taxon>
        <taxon>Alphaproteobacteria</taxon>
        <taxon>Rhodobacterales</taxon>
        <taxon>Paracoccaceae</taxon>
        <taxon>Paracoccus</taxon>
    </lineage>
</organism>
<evidence type="ECO:0000250" key="1"/>
<evidence type="ECO:0000255" key="2"/>
<evidence type="ECO:0000305" key="3"/>
<keyword id="KW-0997">Cell inner membrane</keyword>
<keyword id="KW-1003">Cell membrane</keyword>
<keyword id="KW-0201">Cytochrome c-type biogenesis</keyword>
<keyword id="KW-0472">Membrane</keyword>
<keyword id="KW-1185">Reference proteome</keyword>
<keyword id="KW-0812">Transmembrane</keyword>
<keyword id="KW-1133">Transmembrane helix</keyword>
<keyword id="KW-0813">Transport</keyword>
<name>CCMC_PARDP</name>
<proteinExistence type="inferred from homology"/>
<comment type="function">
    <text evidence="1">Required for the export of heme to the periplasm for the biogenesis of c-type cytochromes.</text>
</comment>
<comment type="subcellular location">
    <subcellularLocation>
        <location evidence="3">Cell inner membrane</location>
        <topology evidence="3">Multi-pass membrane protein</topology>
    </subcellularLocation>
</comment>
<comment type="similarity">
    <text evidence="3">Belongs to the CcmC/CycZ/HelC family.</text>
</comment>
<feature type="chain" id="PRO_0000201557" description="Heme exporter protein C">
    <location>
        <begin position="1"/>
        <end position="241"/>
    </location>
</feature>
<feature type="transmembrane region" description="Helical" evidence="2">
    <location>
        <begin position="19"/>
        <end position="39"/>
    </location>
</feature>
<feature type="transmembrane region" description="Helical" evidence="2">
    <location>
        <begin position="53"/>
        <end position="73"/>
    </location>
</feature>
<feature type="transmembrane region" description="Helical" evidence="2">
    <location>
        <begin position="92"/>
        <end position="112"/>
    </location>
</feature>
<feature type="transmembrane region" description="Helical" evidence="2">
    <location>
        <begin position="126"/>
        <end position="146"/>
    </location>
</feature>
<feature type="transmembrane region" description="Helical" evidence="2">
    <location>
        <begin position="157"/>
        <end position="177"/>
    </location>
</feature>
<feature type="transmembrane region" description="Helical" evidence="2">
    <location>
        <begin position="200"/>
        <end position="220"/>
    </location>
</feature>
<feature type="sequence conflict" description="In Ref. 1; CAA96495." evidence="3" ref="1">
    <original>RT</original>
    <variation>SA</variation>
    <location>
        <begin position="14"/>
        <end position="15"/>
    </location>
</feature>
<feature type="sequence conflict" description="In Ref. 1; CAA96495." evidence="3" ref="1">
    <original>ASLSMAPGERMAA</original>
    <variation>PRCAWRQASAWRP</variation>
    <location>
        <begin position="185"/>
        <end position="197"/>
    </location>
</feature>
<feature type="sequence conflict" description="In Ref. 1; CAA96495." evidence="3" ref="1">
    <original>R</original>
    <variation>A</variation>
    <location>
        <position position="228"/>
    </location>
</feature>
<gene>
    <name type="primary">ccmC</name>
    <name type="ordered locus">Pden_1411</name>
</gene>
<dbReference type="EMBL" id="Z71971">
    <property type="protein sequence ID" value="CAA96495.1"/>
    <property type="molecule type" value="Genomic_DNA"/>
</dbReference>
<dbReference type="EMBL" id="CP000489">
    <property type="protein sequence ID" value="ABL69512.1"/>
    <property type="molecule type" value="Genomic_DNA"/>
</dbReference>
<dbReference type="RefSeq" id="WP_011747730.1">
    <property type="nucleotide sequence ID" value="NC_008686.1"/>
</dbReference>
<dbReference type="SMR" id="P52220"/>
<dbReference type="STRING" id="318586.Pden_1411"/>
<dbReference type="EnsemblBacteria" id="ABL69512">
    <property type="protein sequence ID" value="ABL69512"/>
    <property type="gene ID" value="Pden_1411"/>
</dbReference>
<dbReference type="GeneID" id="93449881"/>
<dbReference type="KEGG" id="pde:Pden_1411"/>
<dbReference type="eggNOG" id="COG0755">
    <property type="taxonomic scope" value="Bacteria"/>
</dbReference>
<dbReference type="HOGENOM" id="CLU_066538_2_1_5"/>
<dbReference type="OrthoDB" id="9778550at2"/>
<dbReference type="Proteomes" id="UP000000361">
    <property type="component" value="Chromosome 1"/>
</dbReference>
<dbReference type="GO" id="GO:0005886">
    <property type="term" value="C:plasma membrane"/>
    <property type="evidence" value="ECO:0007669"/>
    <property type="project" value="UniProtKB-SubCell"/>
</dbReference>
<dbReference type="GO" id="GO:0020037">
    <property type="term" value="F:heme binding"/>
    <property type="evidence" value="ECO:0007669"/>
    <property type="project" value="InterPro"/>
</dbReference>
<dbReference type="GO" id="GO:0015232">
    <property type="term" value="F:heme transmembrane transporter activity"/>
    <property type="evidence" value="ECO:0007669"/>
    <property type="project" value="InterPro"/>
</dbReference>
<dbReference type="GO" id="GO:0017004">
    <property type="term" value="P:cytochrome complex assembly"/>
    <property type="evidence" value="ECO:0007669"/>
    <property type="project" value="UniProtKB-KW"/>
</dbReference>
<dbReference type="InterPro" id="IPR002541">
    <property type="entry name" value="Cyt_c_assembly"/>
</dbReference>
<dbReference type="InterPro" id="IPR003557">
    <property type="entry name" value="Cyt_c_biogenesis_CcmC"/>
</dbReference>
<dbReference type="InterPro" id="IPR045062">
    <property type="entry name" value="Cyt_c_biogenesis_CcsA/CcmC"/>
</dbReference>
<dbReference type="NCBIfam" id="TIGR01191">
    <property type="entry name" value="ccmC"/>
    <property type="match status" value="1"/>
</dbReference>
<dbReference type="PANTHER" id="PTHR30071:SF1">
    <property type="entry name" value="CYTOCHROME B_B6 PROTEIN-RELATED"/>
    <property type="match status" value="1"/>
</dbReference>
<dbReference type="PANTHER" id="PTHR30071">
    <property type="entry name" value="HEME EXPORTER PROTEIN C"/>
    <property type="match status" value="1"/>
</dbReference>
<dbReference type="Pfam" id="PF01578">
    <property type="entry name" value="Cytochrom_C_asm"/>
    <property type="match status" value="1"/>
</dbReference>
<dbReference type="PRINTS" id="PR01386">
    <property type="entry name" value="CCMCBIOGNSIS"/>
</dbReference>